<keyword id="KW-0560">Oxidoreductase</keyword>
<keyword id="KW-1185">Reference proteome</keyword>
<feature type="chain" id="PRO_0000140270" description="Peptide methionine sulfoxide reductase MsrB">
    <location>
        <begin position="1"/>
        <end position="157"/>
    </location>
</feature>
<feature type="domain" description="MsrB" evidence="2">
    <location>
        <begin position="14"/>
        <end position="137"/>
    </location>
</feature>
<feature type="active site" description="Nucleophile" evidence="2">
    <location>
        <position position="126"/>
    </location>
</feature>
<name>MSRB_DEIRA</name>
<comment type="catalytic activity">
    <reaction evidence="1">
        <text>L-methionyl-[protein] + [thioredoxin]-disulfide + H2O = L-methionyl-(R)-S-oxide-[protein] + [thioredoxin]-dithiol</text>
        <dbReference type="Rhea" id="RHEA:24164"/>
        <dbReference type="Rhea" id="RHEA-COMP:10698"/>
        <dbReference type="Rhea" id="RHEA-COMP:10700"/>
        <dbReference type="Rhea" id="RHEA-COMP:12313"/>
        <dbReference type="Rhea" id="RHEA-COMP:12314"/>
        <dbReference type="ChEBI" id="CHEBI:15377"/>
        <dbReference type="ChEBI" id="CHEBI:16044"/>
        <dbReference type="ChEBI" id="CHEBI:29950"/>
        <dbReference type="ChEBI" id="CHEBI:45764"/>
        <dbReference type="ChEBI" id="CHEBI:50058"/>
        <dbReference type="EC" id="1.8.4.12"/>
    </reaction>
</comment>
<comment type="similarity">
    <text evidence="1">Belongs to the MsrB Met sulfoxide reductase family.</text>
</comment>
<protein>
    <recommendedName>
        <fullName evidence="1">Peptide methionine sulfoxide reductase MsrB</fullName>
        <ecNumber evidence="1">1.8.4.12</ecNumber>
    </recommendedName>
    <alternativeName>
        <fullName evidence="1">Peptide-methionine (R)-S-oxide reductase</fullName>
    </alternativeName>
</protein>
<accession>Q9RUK6</accession>
<gene>
    <name evidence="1" type="primary">msrB</name>
    <name type="ordered locus">DR_1378</name>
</gene>
<evidence type="ECO:0000255" key="1">
    <source>
        <dbReference type="HAMAP-Rule" id="MF_01400"/>
    </source>
</evidence>
<evidence type="ECO:0000255" key="2">
    <source>
        <dbReference type="PROSITE-ProRule" id="PRU01126"/>
    </source>
</evidence>
<reference key="1">
    <citation type="journal article" date="1999" name="Science">
        <title>Genome sequence of the radioresistant bacterium Deinococcus radiodurans R1.</title>
        <authorList>
            <person name="White O."/>
            <person name="Eisen J.A."/>
            <person name="Heidelberg J.F."/>
            <person name="Hickey E.K."/>
            <person name="Peterson J.D."/>
            <person name="Dodson R.J."/>
            <person name="Haft D.H."/>
            <person name="Gwinn M.L."/>
            <person name="Nelson W.C."/>
            <person name="Richardson D.L."/>
            <person name="Moffat K.S."/>
            <person name="Qin H."/>
            <person name="Jiang L."/>
            <person name="Pamphile W."/>
            <person name="Crosby M."/>
            <person name="Shen M."/>
            <person name="Vamathevan J.J."/>
            <person name="Lam P."/>
            <person name="McDonald L.A."/>
            <person name="Utterback T.R."/>
            <person name="Zalewski C."/>
            <person name="Makarova K.S."/>
            <person name="Aravind L."/>
            <person name="Daly M.J."/>
            <person name="Minton K.W."/>
            <person name="Fleischmann R.D."/>
            <person name="Ketchum K.A."/>
            <person name="Nelson K.E."/>
            <person name="Salzberg S.L."/>
            <person name="Smith H.O."/>
            <person name="Venter J.C."/>
            <person name="Fraser C.M."/>
        </authorList>
    </citation>
    <scope>NUCLEOTIDE SEQUENCE [LARGE SCALE GENOMIC DNA]</scope>
    <source>
        <strain>ATCC 13939 / DSM 20539 / JCM 16871 / CCUG 27074 / LMG 4051 / NBRC 15346 / NCIMB 9279 / VKM B-1422 / R1</strain>
    </source>
</reference>
<organism>
    <name type="scientific">Deinococcus radiodurans (strain ATCC 13939 / DSM 20539 / JCM 16871 / CCUG 27074 / LMG 4051 / NBRC 15346 / NCIMB 9279 / VKM B-1422 / R1)</name>
    <dbReference type="NCBI Taxonomy" id="243230"/>
    <lineage>
        <taxon>Bacteria</taxon>
        <taxon>Thermotogati</taxon>
        <taxon>Deinococcota</taxon>
        <taxon>Deinococci</taxon>
        <taxon>Deinococcales</taxon>
        <taxon>Deinococcaceae</taxon>
        <taxon>Deinococcus</taxon>
    </lineage>
</organism>
<dbReference type="EC" id="1.8.4.12" evidence="1"/>
<dbReference type="EMBL" id="AE000513">
    <property type="protein sequence ID" value="AAF10947.1"/>
    <property type="molecule type" value="Genomic_DNA"/>
</dbReference>
<dbReference type="PIR" id="C75404">
    <property type="entry name" value="C75404"/>
</dbReference>
<dbReference type="RefSeq" id="NP_295101.1">
    <property type="nucleotide sequence ID" value="NC_001263.1"/>
</dbReference>
<dbReference type="RefSeq" id="WP_010888019.1">
    <property type="nucleotide sequence ID" value="NC_001263.1"/>
</dbReference>
<dbReference type="SMR" id="Q9RUK6"/>
<dbReference type="FunCoup" id="Q9RUK6">
    <property type="interactions" value="325"/>
</dbReference>
<dbReference type="STRING" id="243230.DR_1378"/>
<dbReference type="PaxDb" id="243230-DR_1378"/>
<dbReference type="EnsemblBacteria" id="AAF10947">
    <property type="protein sequence ID" value="AAF10947"/>
    <property type="gene ID" value="DR_1378"/>
</dbReference>
<dbReference type="GeneID" id="69517623"/>
<dbReference type="KEGG" id="dra:DR_1378"/>
<dbReference type="PATRIC" id="fig|243230.17.peg.1575"/>
<dbReference type="eggNOG" id="COG0229">
    <property type="taxonomic scope" value="Bacteria"/>
</dbReference>
<dbReference type="HOGENOM" id="CLU_031040_8_5_0"/>
<dbReference type="InParanoid" id="Q9RUK6"/>
<dbReference type="OrthoDB" id="4174719at2"/>
<dbReference type="Proteomes" id="UP000002524">
    <property type="component" value="Chromosome 1"/>
</dbReference>
<dbReference type="GO" id="GO:0005737">
    <property type="term" value="C:cytoplasm"/>
    <property type="evidence" value="ECO:0000318"/>
    <property type="project" value="GO_Central"/>
</dbReference>
<dbReference type="GO" id="GO:0033743">
    <property type="term" value="F:peptide-methionine (R)-S-oxide reductase activity"/>
    <property type="evidence" value="ECO:0000318"/>
    <property type="project" value="GO_Central"/>
</dbReference>
<dbReference type="GO" id="GO:0030091">
    <property type="term" value="P:protein repair"/>
    <property type="evidence" value="ECO:0007669"/>
    <property type="project" value="InterPro"/>
</dbReference>
<dbReference type="GO" id="GO:0006979">
    <property type="term" value="P:response to oxidative stress"/>
    <property type="evidence" value="ECO:0007669"/>
    <property type="project" value="InterPro"/>
</dbReference>
<dbReference type="FunFam" id="2.170.150.20:FF:000003">
    <property type="entry name" value="Peptide methionine sulfoxide reductase MsrB"/>
    <property type="match status" value="1"/>
</dbReference>
<dbReference type="Gene3D" id="2.170.150.20">
    <property type="entry name" value="Peptide methionine sulfoxide reductase"/>
    <property type="match status" value="1"/>
</dbReference>
<dbReference type="HAMAP" id="MF_01400">
    <property type="entry name" value="MsrB"/>
    <property type="match status" value="1"/>
</dbReference>
<dbReference type="InterPro" id="IPR028427">
    <property type="entry name" value="Met_Sox_Rdtase_MsrB"/>
</dbReference>
<dbReference type="InterPro" id="IPR002579">
    <property type="entry name" value="Met_Sox_Rdtase_MsrB_dom"/>
</dbReference>
<dbReference type="InterPro" id="IPR011057">
    <property type="entry name" value="Mss4-like_sf"/>
</dbReference>
<dbReference type="NCBIfam" id="TIGR00357">
    <property type="entry name" value="peptide-methionine (R)-S-oxide reductase MsrB"/>
    <property type="match status" value="1"/>
</dbReference>
<dbReference type="PANTHER" id="PTHR10173">
    <property type="entry name" value="METHIONINE SULFOXIDE REDUCTASE"/>
    <property type="match status" value="1"/>
</dbReference>
<dbReference type="PANTHER" id="PTHR10173:SF59">
    <property type="entry name" value="PEPTIDE METHIONINE SULFOXIDE REDUCTASE MSRA_MSRB"/>
    <property type="match status" value="1"/>
</dbReference>
<dbReference type="Pfam" id="PF01641">
    <property type="entry name" value="SelR"/>
    <property type="match status" value="1"/>
</dbReference>
<dbReference type="SUPFAM" id="SSF51316">
    <property type="entry name" value="Mss4-like"/>
    <property type="match status" value="1"/>
</dbReference>
<dbReference type="PROSITE" id="PS51790">
    <property type="entry name" value="MSRB"/>
    <property type="match status" value="1"/>
</dbReference>
<sequence>MTQDTKTDFQKPSDNDLRERLTPIQYQVTQHEGTERAFTGEYWDHDEDGIYVDVVSGEPLFSSLDKYDAGCGWPSFTQPIPDVALTENTDYKIGYARTEVRSASADSHLGHVFPDGPRDRGGLRYCINSAALRFVPLSELDAQGYGQYRALFEGRQG</sequence>
<proteinExistence type="inferred from homology"/>